<proteinExistence type="evidence at transcript level"/>
<evidence type="ECO:0000250" key="1">
    <source>
        <dbReference type="UniProtKB" id="O49482"/>
    </source>
</evidence>
<evidence type="ECO:0000303" key="2">
    <source>
    </source>
</evidence>
<evidence type="ECO:0000305" key="3"/>
<protein>
    <recommendedName>
        <fullName evidence="3">Probable cinnamyl alcohol dehydrogenase 8D</fullName>
        <shortName evidence="2">OsCAD8D</shortName>
        <ecNumber evidence="1">1.1.1.195</ecNumber>
    </recommendedName>
</protein>
<reference key="1">
    <citation type="journal article" date="2005" name="Nature">
        <title>The map-based sequence of the rice genome.</title>
        <authorList>
            <consortium name="International rice genome sequencing project (IRGSP)"/>
        </authorList>
    </citation>
    <scope>NUCLEOTIDE SEQUENCE [LARGE SCALE GENOMIC DNA]</scope>
    <source>
        <strain>cv. Nipponbare</strain>
    </source>
</reference>
<reference key="2">
    <citation type="journal article" date="2008" name="Nucleic Acids Res.">
        <title>The rice annotation project database (RAP-DB): 2008 update.</title>
        <authorList>
            <consortium name="The rice annotation project (RAP)"/>
        </authorList>
    </citation>
    <scope>GENOME REANNOTATION</scope>
    <source>
        <strain>cv. Nipponbare</strain>
    </source>
</reference>
<reference key="3">
    <citation type="journal article" date="2013" name="Rice">
        <title>Improvement of the Oryza sativa Nipponbare reference genome using next generation sequence and optical map data.</title>
        <authorList>
            <person name="Kawahara Y."/>
            <person name="de la Bastide M."/>
            <person name="Hamilton J.P."/>
            <person name="Kanamori H."/>
            <person name="McCombie W.R."/>
            <person name="Ouyang S."/>
            <person name="Schwartz D.C."/>
            <person name="Tanaka T."/>
            <person name="Wu J."/>
            <person name="Zhou S."/>
            <person name="Childs K.L."/>
            <person name="Davidson R.M."/>
            <person name="Lin H."/>
            <person name="Quesada-Ocampo L."/>
            <person name="Vaillancourt B."/>
            <person name="Sakai H."/>
            <person name="Lee S.S."/>
            <person name="Kim J."/>
            <person name="Numa H."/>
            <person name="Itoh T."/>
            <person name="Buell C.R."/>
            <person name="Matsumoto T."/>
        </authorList>
    </citation>
    <scope>GENOME REANNOTATION</scope>
    <source>
        <strain>cv. Nipponbare</strain>
    </source>
</reference>
<reference key="4">
    <citation type="journal article" date="2005" name="PLoS Biol.">
        <title>The genomes of Oryza sativa: a history of duplications.</title>
        <authorList>
            <person name="Yu J."/>
            <person name="Wang J."/>
            <person name="Lin W."/>
            <person name="Li S."/>
            <person name="Li H."/>
            <person name="Zhou J."/>
            <person name="Ni P."/>
            <person name="Dong W."/>
            <person name="Hu S."/>
            <person name="Zeng C."/>
            <person name="Zhang J."/>
            <person name="Zhang Y."/>
            <person name="Li R."/>
            <person name="Xu Z."/>
            <person name="Li S."/>
            <person name="Li X."/>
            <person name="Zheng H."/>
            <person name="Cong L."/>
            <person name="Lin L."/>
            <person name="Yin J."/>
            <person name="Geng J."/>
            <person name="Li G."/>
            <person name="Shi J."/>
            <person name="Liu J."/>
            <person name="Lv H."/>
            <person name="Li J."/>
            <person name="Wang J."/>
            <person name="Deng Y."/>
            <person name="Ran L."/>
            <person name="Shi X."/>
            <person name="Wang X."/>
            <person name="Wu Q."/>
            <person name="Li C."/>
            <person name="Ren X."/>
            <person name="Wang J."/>
            <person name="Wang X."/>
            <person name="Li D."/>
            <person name="Liu D."/>
            <person name="Zhang X."/>
            <person name="Ji Z."/>
            <person name="Zhao W."/>
            <person name="Sun Y."/>
            <person name="Zhang Z."/>
            <person name="Bao J."/>
            <person name="Han Y."/>
            <person name="Dong L."/>
            <person name="Ji J."/>
            <person name="Chen P."/>
            <person name="Wu S."/>
            <person name="Liu J."/>
            <person name="Xiao Y."/>
            <person name="Bu D."/>
            <person name="Tan J."/>
            <person name="Yang L."/>
            <person name="Ye C."/>
            <person name="Zhang J."/>
            <person name="Xu J."/>
            <person name="Zhou Y."/>
            <person name="Yu Y."/>
            <person name="Zhang B."/>
            <person name="Zhuang S."/>
            <person name="Wei H."/>
            <person name="Liu B."/>
            <person name="Lei M."/>
            <person name="Yu H."/>
            <person name="Li Y."/>
            <person name="Xu H."/>
            <person name="Wei S."/>
            <person name="He X."/>
            <person name="Fang L."/>
            <person name="Zhang Z."/>
            <person name="Zhang Y."/>
            <person name="Huang X."/>
            <person name="Su Z."/>
            <person name="Tong W."/>
            <person name="Li J."/>
            <person name="Tong Z."/>
            <person name="Li S."/>
            <person name="Ye J."/>
            <person name="Wang L."/>
            <person name="Fang L."/>
            <person name="Lei T."/>
            <person name="Chen C.-S."/>
            <person name="Chen H.-C."/>
            <person name="Xu Z."/>
            <person name="Li H."/>
            <person name="Huang H."/>
            <person name="Zhang F."/>
            <person name="Xu H."/>
            <person name="Li N."/>
            <person name="Zhao C."/>
            <person name="Li S."/>
            <person name="Dong L."/>
            <person name="Huang Y."/>
            <person name="Li L."/>
            <person name="Xi Y."/>
            <person name="Qi Q."/>
            <person name="Li W."/>
            <person name="Zhang B."/>
            <person name="Hu W."/>
            <person name="Zhang Y."/>
            <person name="Tian X."/>
            <person name="Jiao Y."/>
            <person name="Liang X."/>
            <person name="Jin J."/>
            <person name="Gao L."/>
            <person name="Zheng W."/>
            <person name="Hao B."/>
            <person name="Liu S.-M."/>
            <person name="Wang W."/>
            <person name="Yuan L."/>
            <person name="Cao M."/>
            <person name="McDermott J."/>
            <person name="Samudrala R."/>
            <person name="Wang J."/>
            <person name="Wong G.K.-S."/>
            <person name="Yang H."/>
        </authorList>
    </citation>
    <scope>NUCLEOTIDE SEQUENCE [LARGE SCALE GENOMIC DNA]</scope>
    <source>
        <strain>cv. Nipponbare</strain>
    </source>
</reference>
<reference key="5">
    <citation type="submission" date="2006-10" db="EMBL/GenBank/DDBJ databases">
        <title>Oryza sativa full length cDNA.</title>
        <authorList>
            <consortium name="The rice full-length cDNA consortium"/>
        </authorList>
    </citation>
    <scope>NUCLEOTIDE SEQUENCE [LARGE SCALE MRNA]</scope>
    <source>
        <strain>cv. Nipponbare</strain>
    </source>
</reference>
<reference key="6">
    <citation type="journal article" date="2005" name="Planta">
        <title>Structure of the cinnamyl-alcohol dehydrogenase gene family in rice and promoter activity of a member associated with lignification.</title>
        <authorList>
            <person name="Tobias C.M."/>
            <person name="Chow E.K."/>
        </authorList>
    </citation>
    <scope>GENE FAMILY</scope>
    <scope>NOMENCLATURE</scope>
</reference>
<name>CAD8D_ORYSJ</name>
<sequence>MEHNGTAALGWAARDTSGHLSPFSFTRRVQQEDDVTIKVLYCGICHTDLHIIKNEWGNAMYPVVPGHEIVGVVTGVGAGVTKFKAGDTVGVGYFVDSCRACDSCGKGYENYCPTMVITSNGTDYGGATTQGGFSDVMVVRQDYVVRVPASLPPDGAAPLLCAGVTVYSPMVEYGLNGPGKHLGVVGLGGLGHLGVKFGKAFGMKVTVISSSPAKRGEALGRLGADAFLSSRDGEGMAAAAATMDGIIDTVSAGHPLVPLLSLLKPKGQMVVVGAPAMPLQLPAYAIIEGGKRVAGNGVGSVAECQAMLDFAGEHGIAADVEVVAMDAVNAALGRLERNDVRYRFVVDVAGTMHAAAAAAASS</sequence>
<dbReference type="EC" id="1.1.1.195" evidence="1"/>
<dbReference type="EMBL" id="AP005321">
    <property type="protein sequence ID" value="BAD28504.1"/>
    <property type="molecule type" value="Genomic_DNA"/>
</dbReference>
<dbReference type="EMBL" id="AP005421">
    <property type="protein sequence ID" value="BAD28605.1"/>
    <property type="molecule type" value="Genomic_DNA"/>
</dbReference>
<dbReference type="EMBL" id="AP008215">
    <property type="protein sequence ID" value="BAF25028.1"/>
    <property type="molecule type" value="Genomic_DNA"/>
</dbReference>
<dbReference type="EMBL" id="AP014965">
    <property type="protein sequence ID" value="BAT07964.1"/>
    <property type="molecule type" value="Genomic_DNA"/>
</dbReference>
<dbReference type="EMBL" id="CM000146">
    <property type="protein sequence ID" value="EAZ44660.1"/>
    <property type="molecule type" value="Genomic_DNA"/>
</dbReference>
<dbReference type="EMBL" id="AK243022">
    <property type="protein sequence ID" value="BAH01408.1"/>
    <property type="molecule type" value="mRNA"/>
</dbReference>
<dbReference type="RefSeq" id="XP_015610813.1">
    <property type="nucleotide sequence ID" value="XM_015755327.1"/>
</dbReference>
<dbReference type="SMR" id="Q6ERW5"/>
<dbReference type="FunCoup" id="Q6ERW5">
    <property type="interactions" value="57"/>
</dbReference>
<dbReference type="STRING" id="39947.Q6ERW5"/>
<dbReference type="PaxDb" id="39947-Q6ERW5"/>
<dbReference type="EnsemblPlants" id="Os09t0400400-01">
    <property type="protein sequence ID" value="Os09t0400400-01"/>
    <property type="gene ID" value="Os09g0400400"/>
</dbReference>
<dbReference type="Gramene" id="Os09t0400400-01">
    <property type="protein sequence ID" value="Os09t0400400-01"/>
    <property type="gene ID" value="Os09g0400400"/>
</dbReference>
<dbReference type="KEGG" id="dosa:Os09g0400400"/>
<dbReference type="eggNOG" id="KOG0023">
    <property type="taxonomic scope" value="Eukaryota"/>
</dbReference>
<dbReference type="HOGENOM" id="CLU_026673_20_2_1"/>
<dbReference type="InParanoid" id="Q6ERW5"/>
<dbReference type="OMA" id="AIMWARA"/>
<dbReference type="OrthoDB" id="1879366at2759"/>
<dbReference type="UniPathway" id="UPA00711"/>
<dbReference type="Proteomes" id="UP000000763">
    <property type="component" value="Chromosome 9"/>
</dbReference>
<dbReference type="Proteomes" id="UP000007752">
    <property type="component" value="Chromosome 9"/>
</dbReference>
<dbReference type="Proteomes" id="UP000059680">
    <property type="component" value="Chromosome 9"/>
</dbReference>
<dbReference type="GO" id="GO:0045551">
    <property type="term" value="F:cinnamyl-alcohol dehydrogenase activity"/>
    <property type="evidence" value="ECO:0000318"/>
    <property type="project" value="GO_Central"/>
</dbReference>
<dbReference type="GO" id="GO:0050268">
    <property type="term" value="F:coniferyl-alcohol dehydrogenase activity"/>
    <property type="evidence" value="ECO:0007669"/>
    <property type="project" value="RHEA"/>
</dbReference>
<dbReference type="GO" id="GO:0008270">
    <property type="term" value="F:zinc ion binding"/>
    <property type="evidence" value="ECO:0007669"/>
    <property type="project" value="InterPro"/>
</dbReference>
<dbReference type="GO" id="GO:0009809">
    <property type="term" value="P:lignin biosynthetic process"/>
    <property type="evidence" value="ECO:0000318"/>
    <property type="project" value="GO_Central"/>
</dbReference>
<dbReference type="CDD" id="cd05283">
    <property type="entry name" value="CAD1"/>
    <property type="match status" value="1"/>
</dbReference>
<dbReference type="FunFam" id="3.40.50.720:FF:000022">
    <property type="entry name" value="Cinnamyl alcohol dehydrogenase"/>
    <property type="match status" value="1"/>
</dbReference>
<dbReference type="FunFam" id="3.90.180.10:FF:000004">
    <property type="entry name" value="probable cinnamyl alcohol dehydrogenase"/>
    <property type="match status" value="1"/>
</dbReference>
<dbReference type="FunFam" id="3.90.180.10:FF:000100">
    <property type="entry name" value="Putative cinnamyl alcohol dehydrogenase 6"/>
    <property type="match status" value="1"/>
</dbReference>
<dbReference type="Gene3D" id="3.90.180.10">
    <property type="entry name" value="Medium-chain alcohol dehydrogenases, catalytic domain"/>
    <property type="match status" value="1"/>
</dbReference>
<dbReference type="Gene3D" id="3.40.50.720">
    <property type="entry name" value="NAD(P)-binding Rossmann-like Domain"/>
    <property type="match status" value="1"/>
</dbReference>
<dbReference type="InterPro" id="IPR013149">
    <property type="entry name" value="ADH-like_C"/>
</dbReference>
<dbReference type="InterPro" id="IPR013154">
    <property type="entry name" value="ADH-like_N"/>
</dbReference>
<dbReference type="InterPro" id="IPR002328">
    <property type="entry name" value="ADH_Zn_CS"/>
</dbReference>
<dbReference type="InterPro" id="IPR047109">
    <property type="entry name" value="CAD-like"/>
</dbReference>
<dbReference type="InterPro" id="IPR011032">
    <property type="entry name" value="GroES-like_sf"/>
</dbReference>
<dbReference type="InterPro" id="IPR036291">
    <property type="entry name" value="NAD(P)-bd_dom_sf"/>
</dbReference>
<dbReference type="InterPro" id="IPR020843">
    <property type="entry name" value="PKS_ER"/>
</dbReference>
<dbReference type="PANTHER" id="PTHR42683">
    <property type="entry name" value="ALDEHYDE REDUCTASE"/>
    <property type="match status" value="1"/>
</dbReference>
<dbReference type="Pfam" id="PF08240">
    <property type="entry name" value="ADH_N"/>
    <property type="match status" value="1"/>
</dbReference>
<dbReference type="Pfam" id="PF00107">
    <property type="entry name" value="ADH_zinc_N"/>
    <property type="match status" value="1"/>
</dbReference>
<dbReference type="SMART" id="SM00829">
    <property type="entry name" value="PKS_ER"/>
    <property type="match status" value="1"/>
</dbReference>
<dbReference type="SUPFAM" id="SSF50129">
    <property type="entry name" value="GroES-like"/>
    <property type="match status" value="1"/>
</dbReference>
<dbReference type="SUPFAM" id="SSF51735">
    <property type="entry name" value="NAD(P)-binding Rossmann-fold domains"/>
    <property type="match status" value="1"/>
</dbReference>
<dbReference type="PROSITE" id="PS00059">
    <property type="entry name" value="ADH_ZINC"/>
    <property type="match status" value="1"/>
</dbReference>
<organism>
    <name type="scientific">Oryza sativa subsp. japonica</name>
    <name type="common">Rice</name>
    <dbReference type="NCBI Taxonomy" id="39947"/>
    <lineage>
        <taxon>Eukaryota</taxon>
        <taxon>Viridiplantae</taxon>
        <taxon>Streptophyta</taxon>
        <taxon>Embryophyta</taxon>
        <taxon>Tracheophyta</taxon>
        <taxon>Spermatophyta</taxon>
        <taxon>Magnoliopsida</taxon>
        <taxon>Liliopsida</taxon>
        <taxon>Poales</taxon>
        <taxon>Poaceae</taxon>
        <taxon>BOP clade</taxon>
        <taxon>Oryzoideae</taxon>
        <taxon>Oryzeae</taxon>
        <taxon>Oryzinae</taxon>
        <taxon>Oryza</taxon>
        <taxon>Oryza sativa</taxon>
    </lineage>
</organism>
<comment type="function">
    <text evidence="1">Involved in lignin biosynthesis. Catalyzes the final step specific for the production of lignin monomers. Catalyzes the NADPH-dependent reduction of coniferaldehyde, 5-hydroxyconiferaldehyde, sinapaldehyde, 4-coumaraldehyde and caffeyl aldehyde to their respective alcohols.</text>
</comment>
<comment type="catalytic activity">
    <reaction evidence="1">
        <text>(E)-cinnamyl alcohol + NADP(+) = (E)-cinnamaldehyde + NADPH + H(+)</text>
        <dbReference type="Rhea" id="RHEA:10392"/>
        <dbReference type="ChEBI" id="CHEBI:15378"/>
        <dbReference type="ChEBI" id="CHEBI:16731"/>
        <dbReference type="ChEBI" id="CHEBI:33227"/>
        <dbReference type="ChEBI" id="CHEBI:57783"/>
        <dbReference type="ChEBI" id="CHEBI:58349"/>
        <dbReference type="EC" id="1.1.1.195"/>
    </reaction>
    <physiologicalReaction direction="right-to-left" evidence="1">
        <dbReference type="Rhea" id="RHEA:10394"/>
    </physiologicalReaction>
</comment>
<comment type="catalytic activity">
    <reaction evidence="1">
        <text>(E)-coniferol + NADP(+) = (E)-coniferaldehyde + NADPH + H(+)</text>
        <dbReference type="Rhea" id="RHEA:22444"/>
        <dbReference type="ChEBI" id="CHEBI:15378"/>
        <dbReference type="ChEBI" id="CHEBI:16547"/>
        <dbReference type="ChEBI" id="CHEBI:17745"/>
        <dbReference type="ChEBI" id="CHEBI:57783"/>
        <dbReference type="ChEBI" id="CHEBI:58349"/>
        <dbReference type="EC" id="1.1.1.195"/>
    </reaction>
    <physiologicalReaction direction="right-to-left" evidence="1">
        <dbReference type="Rhea" id="RHEA:22446"/>
    </physiologicalReaction>
</comment>
<comment type="catalytic activity">
    <reaction evidence="1">
        <text>(E)-sinapyl alcohol + NADP(+) = (E)-sinapaldehyde + NADPH + H(+)</text>
        <dbReference type="Rhea" id="RHEA:45704"/>
        <dbReference type="ChEBI" id="CHEBI:15378"/>
        <dbReference type="ChEBI" id="CHEBI:27949"/>
        <dbReference type="ChEBI" id="CHEBI:57783"/>
        <dbReference type="ChEBI" id="CHEBI:58349"/>
        <dbReference type="ChEBI" id="CHEBI:64557"/>
        <dbReference type="EC" id="1.1.1.195"/>
    </reaction>
    <physiologicalReaction direction="right-to-left" evidence="1">
        <dbReference type="Rhea" id="RHEA:45706"/>
    </physiologicalReaction>
</comment>
<comment type="catalytic activity">
    <reaction evidence="1">
        <text>(E)-4-coumaroyl alcohol + NADP(+) = (E)-4-coumaraldehyde + NADPH + H(+)</text>
        <dbReference type="Rhea" id="RHEA:45724"/>
        <dbReference type="ChEBI" id="CHEBI:15378"/>
        <dbReference type="ChEBI" id="CHEBI:28353"/>
        <dbReference type="ChEBI" id="CHEBI:57783"/>
        <dbReference type="ChEBI" id="CHEBI:58349"/>
        <dbReference type="ChEBI" id="CHEBI:64555"/>
        <dbReference type="EC" id="1.1.1.195"/>
    </reaction>
    <physiologicalReaction direction="right-to-left" evidence="1">
        <dbReference type="Rhea" id="RHEA:45726"/>
    </physiologicalReaction>
</comment>
<comment type="catalytic activity">
    <reaction evidence="1">
        <text>(E)-caffeyl alcohol + NADP(+) = (E)-caffeyl aldehyde + NADPH + H(+)</text>
        <dbReference type="Rhea" id="RHEA:45728"/>
        <dbReference type="ChEBI" id="CHEBI:15378"/>
        <dbReference type="ChEBI" id="CHEBI:28323"/>
        <dbReference type="ChEBI" id="CHEBI:31334"/>
        <dbReference type="ChEBI" id="CHEBI:57783"/>
        <dbReference type="ChEBI" id="CHEBI:58349"/>
    </reaction>
    <physiologicalReaction direction="right-to-left" evidence="1">
        <dbReference type="Rhea" id="RHEA:45730"/>
    </physiologicalReaction>
</comment>
<comment type="cofactor">
    <cofactor evidence="1">
        <name>Zn(2+)</name>
        <dbReference type="ChEBI" id="CHEBI:29105"/>
    </cofactor>
    <text evidence="1">Binds 2 Zn(2+) ions per subunit.</text>
</comment>
<comment type="pathway">
    <text evidence="1">Aromatic compound metabolism; phenylpropanoid biosynthesis.</text>
</comment>
<comment type="subunit">
    <text evidence="1">Homodimer.</text>
</comment>
<comment type="similarity">
    <text evidence="3">Belongs to the zinc-containing alcohol dehydrogenase family.</text>
</comment>
<gene>
    <name evidence="2" type="primary">CAD8D</name>
    <name type="ordered locus">Os09g0400400</name>
    <name type="ordered locus">LOC_Os09g23560</name>
    <name type="ORF">OsJ_29284</name>
    <name type="ORF">P0435D08.35</name>
    <name type="ORF">P0650H04.17</name>
</gene>
<accession>Q6ERW5</accession>
<accession>A0A0P0XN99</accession>
<feature type="chain" id="PRO_0000382650" description="Probable cinnamyl alcohol dehydrogenase 8D">
    <location>
        <begin position="1"/>
        <end position="362"/>
    </location>
</feature>
<feature type="binding site" evidence="1">
    <location>
        <position position="45"/>
    </location>
    <ligand>
        <name>Zn(2+)</name>
        <dbReference type="ChEBI" id="CHEBI:29105"/>
        <label>1</label>
        <note>catalytic</note>
    </ligand>
</feature>
<feature type="binding site" evidence="1">
    <location>
        <position position="47"/>
    </location>
    <ligand>
        <name>NADP(+)</name>
        <dbReference type="ChEBI" id="CHEBI:58349"/>
    </ligand>
</feature>
<feature type="binding site" evidence="1">
    <location>
        <position position="67"/>
    </location>
    <ligand>
        <name>Zn(2+)</name>
        <dbReference type="ChEBI" id="CHEBI:29105"/>
        <label>1</label>
        <note>catalytic</note>
    </ligand>
</feature>
<feature type="binding site" evidence="1">
    <location>
        <position position="68"/>
    </location>
    <ligand>
        <name>Zn(2+)</name>
        <dbReference type="ChEBI" id="CHEBI:29105"/>
        <label>1</label>
        <note>catalytic</note>
    </ligand>
</feature>
<feature type="binding site" evidence="1">
    <location>
        <position position="98"/>
    </location>
    <ligand>
        <name>Zn(2+)</name>
        <dbReference type="ChEBI" id="CHEBI:29105"/>
        <label>2</label>
    </ligand>
</feature>
<feature type="binding site" evidence="1">
    <location>
        <position position="101"/>
    </location>
    <ligand>
        <name>Zn(2+)</name>
        <dbReference type="ChEBI" id="CHEBI:29105"/>
        <label>2</label>
    </ligand>
</feature>
<feature type="binding site" evidence="1">
    <location>
        <position position="104"/>
    </location>
    <ligand>
        <name>Zn(2+)</name>
        <dbReference type="ChEBI" id="CHEBI:29105"/>
        <label>2</label>
    </ligand>
</feature>
<feature type="binding site" evidence="1">
    <location>
        <position position="112"/>
    </location>
    <ligand>
        <name>Zn(2+)</name>
        <dbReference type="ChEBI" id="CHEBI:29105"/>
        <label>2</label>
    </ligand>
</feature>
<feature type="binding site" evidence="1">
    <location>
        <position position="161"/>
    </location>
    <ligand>
        <name>Zn(2+)</name>
        <dbReference type="ChEBI" id="CHEBI:29105"/>
        <label>1</label>
        <note>catalytic</note>
    </ligand>
</feature>
<feature type="binding site" evidence="1">
    <location>
        <position position="165"/>
    </location>
    <ligand>
        <name>NADP(+)</name>
        <dbReference type="ChEBI" id="CHEBI:58349"/>
    </ligand>
</feature>
<feature type="binding site" evidence="1">
    <location>
        <begin position="186"/>
        <end position="191"/>
    </location>
    <ligand>
        <name>NADP(+)</name>
        <dbReference type="ChEBI" id="CHEBI:58349"/>
    </ligand>
</feature>
<feature type="binding site" evidence="1">
    <location>
        <begin position="209"/>
        <end position="214"/>
    </location>
    <ligand>
        <name>NADP(+)</name>
        <dbReference type="ChEBI" id="CHEBI:58349"/>
    </ligand>
</feature>
<feature type="binding site" evidence="1">
    <location>
        <position position="249"/>
    </location>
    <ligand>
        <name>NADP(+)</name>
        <dbReference type="ChEBI" id="CHEBI:58349"/>
    </ligand>
</feature>
<feature type="binding site" evidence="1">
    <location>
        <position position="273"/>
    </location>
    <ligand>
        <name>NADP(+)</name>
        <dbReference type="ChEBI" id="CHEBI:58349"/>
    </ligand>
</feature>
<feature type="binding site" evidence="1">
    <location>
        <begin position="296"/>
        <end position="298"/>
    </location>
    <ligand>
        <name>NADP(+)</name>
        <dbReference type="ChEBI" id="CHEBI:58349"/>
    </ligand>
</feature>
<keyword id="KW-0438">Lignin biosynthesis</keyword>
<keyword id="KW-0479">Metal-binding</keyword>
<keyword id="KW-0521">NADP</keyword>
<keyword id="KW-0560">Oxidoreductase</keyword>
<keyword id="KW-1185">Reference proteome</keyword>
<keyword id="KW-0862">Zinc</keyword>